<protein>
    <recommendedName>
        <fullName evidence="2">NADH-quinone oxidoreductase subunit C/D</fullName>
        <ecNumber evidence="2">7.1.1.-</ecNumber>
    </recommendedName>
    <alternativeName>
        <fullName evidence="2">NADH dehydrogenase I subunit C/D</fullName>
    </alternativeName>
    <alternativeName>
        <fullName evidence="2">NDH-1 subunit C/D</fullName>
    </alternativeName>
</protein>
<accession>A6L169</accession>
<dbReference type="EC" id="7.1.1.-" evidence="2"/>
<dbReference type="EMBL" id="CP000139">
    <property type="protein sequence ID" value="ABR39433.1"/>
    <property type="molecule type" value="Genomic_DNA"/>
</dbReference>
<dbReference type="RefSeq" id="WP_005842864.1">
    <property type="nucleotide sequence ID" value="NZ_JANSWM010000100.1"/>
</dbReference>
<dbReference type="SMR" id="A6L169"/>
<dbReference type="STRING" id="435590.BVU_1757"/>
<dbReference type="PaxDb" id="435590-BVU_1757"/>
<dbReference type="GeneID" id="5302723"/>
<dbReference type="KEGG" id="bvu:BVU_1757"/>
<dbReference type="eggNOG" id="COG0649">
    <property type="taxonomic scope" value="Bacteria"/>
</dbReference>
<dbReference type="HOGENOM" id="CLU_015134_3_2_10"/>
<dbReference type="BioCyc" id="BVUL435590:G1G59-1845-MONOMER"/>
<dbReference type="Proteomes" id="UP000002861">
    <property type="component" value="Chromosome"/>
</dbReference>
<dbReference type="GO" id="GO:0030964">
    <property type="term" value="C:NADH dehydrogenase complex"/>
    <property type="evidence" value="ECO:0007669"/>
    <property type="project" value="InterPro"/>
</dbReference>
<dbReference type="GO" id="GO:0005886">
    <property type="term" value="C:plasma membrane"/>
    <property type="evidence" value="ECO:0007669"/>
    <property type="project" value="UniProtKB-SubCell"/>
</dbReference>
<dbReference type="GO" id="GO:0051287">
    <property type="term" value="F:NAD binding"/>
    <property type="evidence" value="ECO:0007669"/>
    <property type="project" value="InterPro"/>
</dbReference>
<dbReference type="GO" id="GO:0008137">
    <property type="term" value="F:NADH dehydrogenase (ubiquinone) activity"/>
    <property type="evidence" value="ECO:0007669"/>
    <property type="project" value="InterPro"/>
</dbReference>
<dbReference type="GO" id="GO:0050136">
    <property type="term" value="F:NADH:ubiquinone reductase (non-electrogenic) activity"/>
    <property type="evidence" value="ECO:0007669"/>
    <property type="project" value="UniProtKB-UniRule"/>
</dbReference>
<dbReference type="GO" id="GO:0048038">
    <property type="term" value="F:quinone binding"/>
    <property type="evidence" value="ECO:0007669"/>
    <property type="project" value="UniProtKB-KW"/>
</dbReference>
<dbReference type="Gene3D" id="1.10.645.10">
    <property type="entry name" value="Cytochrome-c3 Hydrogenase, chain B"/>
    <property type="match status" value="1"/>
</dbReference>
<dbReference type="Gene3D" id="3.30.460.80">
    <property type="entry name" value="NADH:ubiquinone oxidoreductase, 30kDa subunit"/>
    <property type="match status" value="1"/>
</dbReference>
<dbReference type="HAMAP" id="MF_01397">
    <property type="entry name" value="NDH1_NuoCD_2"/>
    <property type="match status" value="1"/>
</dbReference>
<dbReference type="HAMAP" id="MF_01358">
    <property type="entry name" value="NDH1_NuoD"/>
    <property type="match status" value="1"/>
</dbReference>
<dbReference type="InterPro" id="IPR001135">
    <property type="entry name" value="NADH_Q_OxRdtase_suD"/>
</dbReference>
<dbReference type="InterPro" id="IPR037232">
    <property type="entry name" value="NADH_quin_OxRdtase_su_C/D-like"/>
</dbReference>
<dbReference type="InterPro" id="IPR001268">
    <property type="entry name" value="NADH_UbQ_OxRdtase_30kDa_su"/>
</dbReference>
<dbReference type="InterPro" id="IPR026662">
    <property type="entry name" value="NDH-1_subunit_CD"/>
</dbReference>
<dbReference type="InterPro" id="IPR022885">
    <property type="entry name" value="NDH1_su_D/H"/>
</dbReference>
<dbReference type="InterPro" id="IPR029014">
    <property type="entry name" value="NiFe-Hase_large"/>
</dbReference>
<dbReference type="NCBIfam" id="NF004739">
    <property type="entry name" value="PRK06075.1"/>
    <property type="match status" value="1"/>
</dbReference>
<dbReference type="PANTHER" id="PTHR11993:SF10">
    <property type="entry name" value="NADH DEHYDROGENASE [UBIQUINONE] IRON-SULFUR PROTEIN 2, MITOCHONDRIAL"/>
    <property type="match status" value="1"/>
</dbReference>
<dbReference type="PANTHER" id="PTHR11993">
    <property type="entry name" value="NADH-UBIQUINONE OXIDOREDUCTASE 49 KDA SUBUNIT"/>
    <property type="match status" value="1"/>
</dbReference>
<dbReference type="Pfam" id="PF00329">
    <property type="entry name" value="Complex1_30kDa"/>
    <property type="match status" value="1"/>
</dbReference>
<dbReference type="Pfam" id="PF00346">
    <property type="entry name" value="Complex1_49kDa"/>
    <property type="match status" value="2"/>
</dbReference>
<dbReference type="SUPFAM" id="SSF56762">
    <property type="entry name" value="HydB/Nqo4-like"/>
    <property type="match status" value="1"/>
</dbReference>
<dbReference type="SUPFAM" id="SSF143243">
    <property type="entry name" value="Nqo5-like"/>
    <property type="match status" value="1"/>
</dbReference>
<proteinExistence type="inferred from homology"/>
<gene>
    <name evidence="2" type="primary">nuoC</name>
    <name type="synonym">nuoCD</name>
    <name type="synonym">nuoD</name>
    <name type="ordered locus">BVU_1757</name>
</gene>
<keyword id="KW-0997">Cell inner membrane</keyword>
<keyword id="KW-1003">Cell membrane</keyword>
<keyword id="KW-0472">Membrane</keyword>
<keyword id="KW-0511">Multifunctional enzyme</keyword>
<keyword id="KW-0520">NAD</keyword>
<keyword id="KW-0874">Quinone</keyword>
<keyword id="KW-1278">Translocase</keyword>
<keyword id="KW-0813">Transport</keyword>
<comment type="function">
    <text evidence="1">NDH-1 shuttles electrons from NADH, via FMN and iron-sulfur (Fe-S) centers, to quinones in the respiratory chain. The immediate electron acceptor for the enzyme in this species is believed to be a menaquinone. Couples the redox reaction to proton translocation (for every two electrons transferred, four hydrogen ions are translocated across the cytoplasmic membrane), and thus conserves the redox energy in a proton gradient (By similarity).</text>
</comment>
<comment type="catalytic activity">
    <reaction evidence="2">
        <text>a quinone + NADH + 5 H(+)(in) = a quinol + NAD(+) + 4 H(+)(out)</text>
        <dbReference type="Rhea" id="RHEA:57888"/>
        <dbReference type="ChEBI" id="CHEBI:15378"/>
        <dbReference type="ChEBI" id="CHEBI:24646"/>
        <dbReference type="ChEBI" id="CHEBI:57540"/>
        <dbReference type="ChEBI" id="CHEBI:57945"/>
        <dbReference type="ChEBI" id="CHEBI:132124"/>
    </reaction>
</comment>
<comment type="subunit">
    <text evidence="2">NDH-1 is composed of 13 different subunits. Subunits NuoB, CD, E, F, and G constitute the peripheral sector of the complex.</text>
</comment>
<comment type="subcellular location">
    <subcellularLocation>
        <location evidence="2">Cell inner membrane</location>
        <topology evidence="2">Peripheral membrane protein</topology>
        <orientation evidence="1">Cytoplasmic side</orientation>
    </subcellularLocation>
</comment>
<comment type="similarity">
    <text evidence="2">In the N-terminal section; belongs to the complex I 30 kDa subunit family.</text>
</comment>
<comment type="similarity">
    <text evidence="2">In the C-terminal section; belongs to the complex I 49 kDa subunit family.</text>
</comment>
<evidence type="ECO:0000250" key="1"/>
<evidence type="ECO:0000255" key="2">
    <source>
        <dbReference type="HAMAP-Rule" id="MF_01397"/>
    </source>
</evidence>
<reference key="1">
    <citation type="journal article" date="2007" name="PLoS Biol.">
        <title>Evolution of symbiotic bacteria in the distal human intestine.</title>
        <authorList>
            <person name="Xu J."/>
            <person name="Mahowald M.A."/>
            <person name="Ley R.E."/>
            <person name="Lozupone C.A."/>
            <person name="Hamady M."/>
            <person name="Martens E.C."/>
            <person name="Henrissat B."/>
            <person name="Coutinho P.M."/>
            <person name="Minx P."/>
            <person name="Latreille P."/>
            <person name="Cordum H."/>
            <person name="Van Brunt A."/>
            <person name="Kim K."/>
            <person name="Fulton R.S."/>
            <person name="Fulton L.A."/>
            <person name="Clifton S.W."/>
            <person name="Wilson R.K."/>
            <person name="Knight R.D."/>
            <person name="Gordon J.I."/>
        </authorList>
    </citation>
    <scope>NUCLEOTIDE SEQUENCE [LARGE SCALE GENOMIC DNA]</scope>
    <source>
        <strain>ATCC 8482 / DSM 1447 / JCM 5826 / CCUG 4940 / NBRC 14291 / NCTC 11154</strain>
    </source>
</reference>
<sequence length="519" mass="59740">MSERIEIPAEKLHEEMLKLRQGKHMDFLRSLTGMDWGEEGLGVVYHLEDTNTRENIVVSTRTTNREKPELPSVSDIWKGAEFNEREVYDYYGIRFIGHPDMRRLFLRDDWVGYPLRKDYDESLNPLRMTNEEPVDTTQYIEVQHDGSVIEKRETIFDEDEYIINIGPQHPATHGVLRFRVSLEGEIIKKLDVHCGYIHRGIEKMCESLTYPQTLALTDRLDYLGAHQNRHALCMCIEQAMGVEVSERVQYIRTIMDELQRIDSHLLFFSCLCMDMGALTAFFYGFRDREKILDIFEATTGGRLIQNYNTIGGVQADIAPDFVQKVKEFIAYLRPMLKEYHEVFTGNVIAQERLKGVGVLSREDAISFGATGGTGRASGWACDVRKRHPYAMYGKVDFKEIVHTEGDCFARYMVRMEEILESMDIIEQLIDNIPEGNYQEKMKPIIRVPEGNYYAAVEGSRGEFGVYLESRGDKFPYRMKFRATGLPLVSAMETMCRNAKIADLIAIGGTVDYVVPDIDR</sequence>
<feature type="chain" id="PRO_0000358619" description="NADH-quinone oxidoreductase subunit C/D">
    <location>
        <begin position="1"/>
        <end position="519"/>
    </location>
</feature>
<feature type="region of interest" description="NADH dehydrogenase I subunit C" evidence="2">
    <location>
        <begin position="1"/>
        <end position="138"/>
    </location>
</feature>
<feature type="region of interest" description="NADH dehydrogenase I subunit D" evidence="2">
    <location>
        <begin position="159"/>
        <end position="519"/>
    </location>
</feature>
<name>NUOCD_PHOV8</name>
<organism>
    <name type="scientific">Phocaeicola vulgatus (strain ATCC 8482 / DSM 1447 / JCM 5826 / CCUG 4940 / NBRC 14291 / NCTC 11154)</name>
    <name type="common">Bacteroides vulgatus</name>
    <dbReference type="NCBI Taxonomy" id="435590"/>
    <lineage>
        <taxon>Bacteria</taxon>
        <taxon>Pseudomonadati</taxon>
        <taxon>Bacteroidota</taxon>
        <taxon>Bacteroidia</taxon>
        <taxon>Bacteroidales</taxon>
        <taxon>Bacteroidaceae</taxon>
        <taxon>Phocaeicola</taxon>
    </lineage>
</organism>